<protein>
    <recommendedName>
        <fullName evidence="1">Ribosome-binding factor A</fullName>
    </recommendedName>
</protein>
<feature type="chain" id="PRO_0000102633" description="Ribosome-binding factor A">
    <location>
        <begin position="1"/>
        <end position="150"/>
    </location>
</feature>
<feature type="region of interest" description="Disordered" evidence="2">
    <location>
        <begin position="126"/>
        <end position="150"/>
    </location>
</feature>
<keyword id="KW-0963">Cytoplasm</keyword>
<keyword id="KW-0690">Ribosome biogenesis</keyword>
<comment type="function">
    <text evidence="1">One of several proteins that assist in the late maturation steps of the functional core of the 30S ribosomal subunit. Associates with free 30S ribosomal subunits (but not with 30S subunits that are part of 70S ribosomes or polysomes). Required for efficient processing of 16S rRNA. May interact with the 5'-terminal helix region of 16S rRNA.</text>
</comment>
<comment type="subunit">
    <text evidence="1">Monomer. Binds 30S ribosomal subunits, but not 50S ribosomal subunits or 70S ribosomes.</text>
</comment>
<comment type="subcellular location">
    <subcellularLocation>
        <location evidence="1">Cytoplasm</location>
    </subcellularLocation>
</comment>
<comment type="similarity">
    <text evidence="1">Belongs to the RbfA family.</text>
</comment>
<gene>
    <name evidence="1" type="primary">rbfA</name>
    <name type="ordered locus">BR2166</name>
    <name type="ordered locus">BS1330_I2160</name>
</gene>
<dbReference type="EMBL" id="AE014291">
    <property type="protein sequence ID" value="AAN31056.1"/>
    <property type="molecule type" value="Genomic_DNA"/>
</dbReference>
<dbReference type="EMBL" id="CP002997">
    <property type="protein sequence ID" value="AEM19473.1"/>
    <property type="molecule type" value="Genomic_DNA"/>
</dbReference>
<dbReference type="RefSeq" id="WP_002965228.1">
    <property type="nucleotide sequence ID" value="NZ_KN046804.1"/>
</dbReference>
<dbReference type="SMR" id="Q8FXT1"/>
<dbReference type="GeneID" id="97534581"/>
<dbReference type="KEGG" id="bms:BR2166"/>
<dbReference type="KEGG" id="bsi:BS1330_I2160"/>
<dbReference type="PATRIC" id="fig|204722.21.peg.644"/>
<dbReference type="HOGENOM" id="CLU_089475_1_0_5"/>
<dbReference type="Proteomes" id="UP000007104">
    <property type="component" value="Chromosome I"/>
</dbReference>
<dbReference type="GO" id="GO:0005829">
    <property type="term" value="C:cytosol"/>
    <property type="evidence" value="ECO:0007669"/>
    <property type="project" value="TreeGrafter"/>
</dbReference>
<dbReference type="GO" id="GO:0043024">
    <property type="term" value="F:ribosomal small subunit binding"/>
    <property type="evidence" value="ECO:0007669"/>
    <property type="project" value="TreeGrafter"/>
</dbReference>
<dbReference type="GO" id="GO:0030490">
    <property type="term" value="P:maturation of SSU-rRNA"/>
    <property type="evidence" value="ECO:0007669"/>
    <property type="project" value="UniProtKB-UniRule"/>
</dbReference>
<dbReference type="Gene3D" id="3.30.300.20">
    <property type="match status" value="1"/>
</dbReference>
<dbReference type="HAMAP" id="MF_00003">
    <property type="entry name" value="RbfA"/>
    <property type="match status" value="1"/>
</dbReference>
<dbReference type="InterPro" id="IPR015946">
    <property type="entry name" value="KH_dom-like_a/b"/>
</dbReference>
<dbReference type="InterPro" id="IPR000238">
    <property type="entry name" value="RbfA"/>
</dbReference>
<dbReference type="InterPro" id="IPR023799">
    <property type="entry name" value="RbfA_dom_sf"/>
</dbReference>
<dbReference type="InterPro" id="IPR020053">
    <property type="entry name" value="Ribosome-bd_factorA_CS"/>
</dbReference>
<dbReference type="NCBIfam" id="NF001802">
    <property type="entry name" value="PRK00521.2-5"/>
    <property type="match status" value="1"/>
</dbReference>
<dbReference type="NCBIfam" id="TIGR00082">
    <property type="entry name" value="rbfA"/>
    <property type="match status" value="1"/>
</dbReference>
<dbReference type="PANTHER" id="PTHR33515">
    <property type="entry name" value="RIBOSOME-BINDING FACTOR A, CHLOROPLASTIC-RELATED"/>
    <property type="match status" value="1"/>
</dbReference>
<dbReference type="PANTHER" id="PTHR33515:SF1">
    <property type="entry name" value="RIBOSOME-BINDING FACTOR A, CHLOROPLASTIC-RELATED"/>
    <property type="match status" value="1"/>
</dbReference>
<dbReference type="Pfam" id="PF02033">
    <property type="entry name" value="RBFA"/>
    <property type="match status" value="1"/>
</dbReference>
<dbReference type="SUPFAM" id="SSF89919">
    <property type="entry name" value="Ribosome-binding factor A, RbfA"/>
    <property type="match status" value="1"/>
</dbReference>
<dbReference type="PROSITE" id="PS01319">
    <property type="entry name" value="RBFA"/>
    <property type="match status" value="1"/>
</dbReference>
<proteinExistence type="inferred from homology"/>
<organism>
    <name type="scientific">Brucella suis biovar 1 (strain 1330)</name>
    <dbReference type="NCBI Taxonomy" id="204722"/>
    <lineage>
        <taxon>Bacteria</taxon>
        <taxon>Pseudomonadati</taxon>
        <taxon>Pseudomonadota</taxon>
        <taxon>Alphaproteobacteria</taxon>
        <taxon>Hyphomicrobiales</taxon>
        <taxon>Brucellaceae</taxon>
        <taxon>Brucella/Ochrobactrum group</taxon>
        <taxon>Brucella</taxon>
    </lineage>
</organism>
<name>RBFA_BRUSU</name>
<evidence type="ECO:0000255" key="1">
    <source>
        <dbReference type="HAMAP-Rule" id="MF_00003"/>
    </source>
</evidence>
<evidence type="ECO:0000256" key="2">
    <source>
        <dbReference type="SAM" id="MobiDB-lite"/>
    </source>
</evidence>
<reference key="1">
    <citation type="journal article" date="2002" name="Proc. Natl. Acad. Sci. U.S.A.">
        <title>The Brucella suis genome reveals fundamental similarities between animal and plant pathogens and symbionts.</title>
        <authorList>
            <person name="Paulsen I.T."/>
            <person name="Seshadri R."/>
            <person name="Nelson K.E."/>
            <person name="Eisen J.A."/>
            <person name="Heidelberg J.F."/>
            <person name="Read T.D."/>
            <person name="Dodson R.J."/>
            <person name="Umayam L.A."/>
            <person name="Brinkac L.M."/>
            <person name="Beanan M.J."/>
            <person name="Daugherty S.C."/>
            <person name="DeBoy R.T."/>
            <person name="Durkin A.S."/>
            <person name="Kolonay J.F."/>
            <person name="Madupu R."/>
            <person name="Nelson W.C."/>
            <person name="Ayodeji B."/>
            <person name="Kraul M."/>
            <person name="Shetty J."/>
            <person name="Malek J.A."/>
            <person name="Van Aken S.E."/>
            <person name="Riedmuller S."/>
            <person name="Tettelin H."/>
            <person name="Gill S.R."/>
            <person name="White O."/>
            <person name="Salzberg S.L."/>
            <person name="Hoover D.L."/>
            <person name="Lindler L.E."/>
            <person name="Halling S.M."/>
            <person name="Boyle S.M."/>
            <person name="Fraser C.M."/>
        </authorList>
    </citation>
    <scope>NUCLEOTIDE SEQUENCE [LARGE SCALE GENOMIC DNA]</scope>
    <source>
        <strain>1330</strain>
    </source>
</reference>
<reference key="2">
    <citation type="journal article" date="2011" name="J. Bacteriol.">
        <title>Revised genome sequence of Brucella suis 1330.</title>
        <authorList>
            <person name="Tae H."/>
            <person name="Shallom S."/>
            <person name="Settlage R."/>
            <person name="Preston D."/>
            <person name="Adams L.G."/>
            <person name="Garner H.R."/>
        </authorList>
    </citation>
    <scope>NUCLEOTIDE SEQUENCE [LARGE SCALE GENOMIC DNA]</scope>
    <source>
        <strain>1330</strain>
    </source>
</reference>
<accession>Q8FXT1</accession>
<accession>G0K9J2</accession>
<sequence>MARSHDTKGSGGLSQRQLRVGEQVRHALAQVLQRGEIRDDLIERTVISVSEVRMSPDLKIATCFITPLGSADPQAVIKALASHAKFIRGRVAPSLAQMKYMPEFRFRPDTSFDNFSKIDALLRSPEVARDLSHDDDEDGGADEAPRNGDE</sequence>